<name>SYL_PARUW</name>
<feature type="chain" id="PRO_0000152058" description="Leucine--tRNA ligase">
    <location>
        <begin position="1"/>
        <end position="845"/>
    </location>
</feature>
<feature type="short sequence motif" description="'HIGH' region">
    <location>
        <begin position="40"/>
        <end position="51"/>
    </location>
</feature>
<feature type="short sequence motif" description="'KMSKS' region">
    <location>
        <begin position="623"/>
        <end position="627"/>
    </location>
</feature>
<feature type="binding site" evidence="1">
    <location>
        <position position="626"/>
    </location>
    <ligand>
        <name>ATP</name>
        <dbReference type="ChEBI" id="CHEBI:30616"/>
    </ligand>
</feature>
<dbReference type="EC" id="6.1.1.4" evidence="1"/>
<dbReference type="EMBL" id="BX908798">
    <property type="protein sequence ID" value="CAF23771.1"/>
    <property type="molecule type" value="Genomic_DNA"/>
</dbReference>
<dbReference type="RefSeq" id="WP_011175597.1">
    <property type="nucleotide sequence ID" value="NC_005861.2"/>
</dbReference>
<dbReference type="SMR" id="Q6MCC8"/>
<dbReference type="STRING" id="264201.pc1047"/>
<dbReference type="KEGG" id="pcu:PC_RS05045"/>
<dbReference type="eggNOG" id="COG0495">
    <property type="taxonomic scope" value="Bacteria"/>
</dbReference>
<dbReference type="HOGENOM" id="CLU_004427_0_0_0"/>
<dbReference type="OrthoDB" id="9810365at2"/>
<dbReference type="Proteomes" id="UP000000529">
    <property type="component" value="Chromosome"/>
</dbReference>
<dbReference type="GO" id="GO:0005829">
    <property type="term" value="C:cytosol"/>
    <property type="evidence" value="ECO:0007669"/>
    <property type="project" value="TreeGrafter"/>
</dbReference>
<dbReference type="GO" id="GO:0002161">
    <property type="term" value="F:aminoacyl-tRNA deacylase activity"/>
    <property type="evidence" value="ECO:0007669"/>
    <property type="project" value="InterPro"/>
</dbReference>
<dbReference type="GO" id="GO:0005524">
    <property type="term" value="F:ATP binding"/>
    <property type="evidence" value="ECO:0007669"/>
    <property type="project" value="UniProtKB-UniRule"/>
</dbReference>
<dbReference type="GO" id="GO:0004823">
    <property type="term" value="F:leucine-tRNA ligase activity"/>
    <property type="evidence" value="ECO:0007669"/>
    <property type="project" value="UniProtKB-UniRule"/>
</dbReference>
<dbReference type="GO" id="GO:0006429">
    <property type="term" value="P:leucyl-tRNA aminoacylation"/>
    <property type="evidence" value="ECO:0007669"/>
    <property type="project" value="UniProtKB-UniRule"/>
</dbReference>
<dbReference type="CDD" id="cd07958">
    <property type="entry name" value="Anticodon_Ia_Leu_BEm"/>
    <property type="match status" value="1"/>
</dbReference>
<dbReference type="CDD" id="cd00812">
    <property type="entry name" value="LeuRS_core"/>
    <property type="match status" value="1"/>
</dbReference>
<dbReference type="FunFam" id="1.10.730.10:FF:000002">
    <property type="entry name" value="Leucine--tRNA ligase"/>
    <property type="match status" value="1"/>
</dbReference>
<dbReference type="FunFam" id="3.40.50.620:FF:000056">
    <property type="entry name" value="Leucine--tRNA ligase"/>
    <property type="match status" value="1"/>
</dbReference>
<dbReference type="FunFam" id="3.40.50.620:FF:000077">
    <property type="entry name" value="Leucine--tRNA ligase"/>
    <property type="match status" value="1"/>
</dbReference>
<dbReference type="Gene3D" id="3.40.50.620">
    <property type="entry name" value="HUPs"/>
    <property type="match status" value="2"/>
</dbReference>
<dbReference type="Gene3D" id="1.10.730.10">
    <property type="entry name" value="Isoleucyl-tRNA Synthetase, Domain 1"/>
    <property type="match status" value="1"/>
</dbReference>
<dbReference type="HAMAP" id="MF_00049_B">
    <property type="entry name" value="Leu_tRNA_synth_B"/>
    <property type="match status" value="1"/>
</dbReference>
<dbReference type="InterPro" id="IPR001412">
    <property type="entry name" value="aa-tRNA-synth_I_CS"/>
</dbReference>
<dbReference type="InterPro" id="IPR002300">
    <property type="entry name" value="aa-tRNA-synth_Ia"/>
</dbReference>
<dbReference type="InterPro" id="IPR002302">
    <property type="entry name" value="Leu-tRNA-ligase"/>
</dbReference>
<dbReference type="InterPro" id="IPR025709">
    <property type="entry name" value="Leu_tRNA-synth_edit"/>
</dbReference>
<dbReference type="InterPro" id="IPR013155">
    <property type="entry name" value="M/V/L/I-tRNA-synth_anticd-bd"/>
</dbReference>
<dbReference type="InterPro" id="IPR015413">
    <property type="entry name" value="Methionyl/Leucyl_tRNA_Synth"/>
</dbReference>
<dbReference type="InterPro" id="IPR014729">
    <property type="entry name" value="Rossmann-like_a/b/a_fold"/>
</dbReference>
<dbReference type="InterPro" id="IPR009080">
    <property type="entry name" value="tRNAsynth_Ia_anticodon-bd"/>
</dbReference>
<dbReference type="InterPro" id="IPR009008">
    <property type="entry name" value="Val/Leu/Ile-tRNA-synth_edit"/>
</dbReference>
<dbReference type="NCBIfam" id="TIGR00396">
    <property type="entry name" value="leuS_bact"/>
    <property type="match status" value="1"/>
</dbReference>
<dbReference type="PANTHER" id="PTHR43740:SF2">
    <property type="entry name" value="LEUCINE--TRNA LIGASE, MITOCHONDRIAL"/>
    <property type="match status" value="1"/>
</dbReference>
<dbReference type="PANTHER" id="PTHR43740">
    <property type="entry name" value="LEUCYL-TRNA SYNTHETASE"/>
    <property type="match status" value="1"/>
</dbReference>
<dbReference type="Pfam" id="PF08264">
    <property type="entry name" value="Anticodon_1"/>
    <property type="match status" value="1"/>
</dbReference>
<dbReference type="Pfam" id="PF00133">
    <property type="entry name" value="tRNA-synt_1"/>
    <property type="match status" value="1"/>
</dbReference>
<dbReference type="Pfam" id="PF13603">
    <property type="entry name" value="tRNA-synt_1_2"/>
    <property type="match status" value="1"/>
</dbReference>
<dbReference type="Pfam" id="PF09334">
    <property type="entry name" value="tRNA-synt_1g"/>
    <property type="match status" value="1"/>
</dbReference>
<dbReference type="PRINTS" id="PR00985">
    <property type="entry name" value="TRNASYNTHLEU"/>
</dbReference>
<dbReference type="SUPFAM" id="SSF47323">
    <property type="entry name" value="Anticodon-binding domain of a subclass of class I aminoacyl-tRNA synthetases"/>
    <property type="match status" value="1"/>
</dbReference>
<dbReference type="SUPFAM" id="SSF52374">
    <property type="entry name" value="Nucleotidylyl transferase"/>
    <property type="match status" value="1"/>
</dbReference>
<dbReference type="SUPFAM" id="SSF50677">
    <property type="entry name" value="ValRS/IleRS/LeuRS editing domain"/>
    <property type="match status" value="1"/>
</dbReference>
<dbReference type="PROSITE" id="PS00178">
    <property type="entry name" value="AA_TRNA_LIGASE_I"/>
    <property type="match status" value="1"/>
</dbReference>
<keyword id="KW-0030">Aminoacyl-tRNA synthetase</keyword>
<keyword id="KW-0067">ATP-binding</keyword>
<keyword id="KW-0963">Cytoplasm</keyword>
<keyword id="KW-0436">Ligase</keyword>
<keyword id="KW-0547">Nucleotide-binding</keyword>
<keyword id="KW-0648">Protein biosynthesis</keyword>
<keyword id="KW-1185">Reference proteome</keyword>
<protein>
    <recommendedName>
        <fullName evidence="1">Leucine--tRNA ligase</fullName>
        <ecNumber evidence="1">6.1.1.4</ecNumber>
    </recommendedName>
    <alternativeName>
        <fullName evidence="1">Leucyl-tRNA synthetase</fullName>
        <shortName evidence="1">LeuRS</shortName>
    </alternativeName>
</protein>
<proteinExistence type="inferred from homology"/>
<sequence length="845" mass="97641">MKYDHQQIEAKWQKFWQDNQTYRSDDNFQKPKYYVLDMFPYPSGAGLHVGHVVGYTATDIIARYMRTKGYNVMHPMGWDSFGLPAEQYAIRTGTHPAESTQENINNYRRQLRALGFSYDWNRELATSDPNYYKWTQWIFTKLYEKGLAYEAEMLVNYCPALGTVLANEEIENGKTKDGGHPVERRPLKQWILKITAYADRLLQDLDLLDWPESLKKLQINWIGKSEGAYVQFIEKTTQEAFSVFTTRPDTLFGVSYLVLAPEHPLVSHITASSQQQAVRAYQAQIASKSDLDRTELNRDKTGVFTGAYAVNPVNHKEIPIWISDYVLMNVGTGAIMAVPAHDERDFEFAKTFKLPIIPVYDPVCEEITIRNQVLAGQQCWPGHGICVNSACGDLSLNGLNLDQAKKIVINWLEINHKGKSATTYKLRDWLFSRQRYWGEPFPLLKFEDGSVRLLDEDELPLCPPAITNYKPTGDGKGPLTQIKEWVEIIDTKTGKKAFRDTNIMPQWAGSCWYYLRFCDPHNTEKAFSPEKEKYWLPVDLYIGGVEHAVLHLLYARFWHKVLYDCGYVHTLEPFQTLRNQGLVVARSYQNKMRVYVEPRYVEQRDGKYFDSRTGEELTSQIDKMSKSKLNGESPDEIIQEYGADALRLYEMFMGPLEKEKVWNTDAVSGTRRFLNRFYEMAFSDKVTNETSEEGLKLGHRLVHSVMKDMELLQFNTAIAKMMEFINEFTKLVTYPKQVIQMATQVLAPFAPHLAEEVWEHLKCEGSLSFTPYPQVEEKYLQENVITYVVQINGKVRGRFDLPKDQTQENVLEAAKNNPHIQQYINKKEIGKVVFVPNKLLSIVLR</sequence>
<accession>Q6MCC8</accession>
<evidence type="ECO:0000255" key="1">
    <source>
        <dbReference type="HAMAP-Rule" id="MF_00049"/>
    </source>
</evidence>
<organism>
    <name type="scientific">Protochlamydia amoebophila (strain UWE25)</name>
    <dbReference type="NCBI Taxonomy" id="264201"/>
    <lineage>
        <taxon>Bacteria</taxon>
        <taxon>Pseudomonadati</taxon>
        <taxon>Chlamydiota</taxon>
        <taxon>Chlamydiia</taxon>
        <taxon>Parachlamydiales</taxon>
        <taxon>Parachlamydiaceae</taxon>
        <taxon>Candidatus Protochlamydia</taxon>
    </lineage>
</organism>
<gene>
    <name evidence="1" type="primary">leuS</name>
    <name type="ordered locus">pc1047</name>
</gene>
<comment type="catalytic activity">
    <reaction evidence="1">
        <text>tRNA(Leu) + L-leucine + ATP = L-leucyl-tRNA(Leu) + AMP + diphosphate</text>
        <dbReference type="Rhea" id="RHEA:11688"/>
        <dbReference type="Rhea" id="RHEA-COMP:9613"/>
        <dbReference type="Rhea" id="RHEA-COMP:9622"/>
        <dbReference type="ChEBI" id="CHEBI:30616"/>
        <dbReference type="ChEBI" id="CHEBI:33019"/>
        <dbReference type="ChEBI" id="CHEBI:57427"/>
        <dbReference type="ChEBI" id="CHEBI:78442"/>
        <dbReference type="ChEBI" id="CHEBI:78494"/>
        <dbReference type="ChEBI" id="CHEBI:456215"/>
        <dbReference type="EC" id="6.1.1.4"/>
    </reaction>
</comment>
<comment type="subcellular location">
    <subcellularLocation>
        <location evidence="1">Cytoplasm</location>
    </subcellularLocation>
</comment>
<comment type="similarity">
    <text evidence="1">Belongs to the class-I aminoacyl-tRNA synthetase family.</text>
</comment>
<reference key="1">
    <citation type="journal article" date="2004" name="Science">
        <title>Illuminating the evolutionary history of chlamydiae.</title>
        <authorList>
            <person name="Horn M."/>
            <person name="Collingro A."/>
            <person name="Schmitz-Esser S."/>
            <person name="Beier C.L."/>
            <person name="Purkhold U."/>
            <person name="Fartmann B."/>
            <person name="Brandt P."/>
            <person name="Nyakatura G.J."/>
            <person name="Droege M."/>
            <person name="Frishman D."/>
            <person name="Rattei T."/>
            <person name="Mewes H.-W."/>
            <person name="Wagner M."/>
        </authorList>
    </citation>
    <scope>NUCLEOTIDE SEQUENCE [LARGE SCALE GENOMIC DNA]</scope>
    <source>
        <strain>UWE25</strain>
    </source>
</reference>